<protein>
    <recommendedName>
        <fullName evidence="4">Group 2 truncated hemoglobin 3-1</fullName>
        <shortName evidence="4">LjGlb3-1</shortName>
    </recommendedName>
    <alternativeName>
        <fullName evidence="6">Phytoglobin 3.1</fullName>
        <shortName evidence="6">Phytogb3.1</shortName>
    </alternativeName>
    <alternativeName>
        <fullName evidence="6">Two-on-two hemoglobin 3-1</fullName>
        <shortName evidence="6">2-on-2 hemoglobin 3-1</shortName>
    </alternativeName>
</protein>
<sequence>MQSLQHKASEWSGVLTSNAFAIDDTNLFEKLGLQTFISLSTNFYNRVYDDEEEWFHLIFANSDKQIAIQNQYEFLVQRMGGPPLYSQRRGHPALIARHRAFPVTHEAAERWLHHMQQAVDTSSDIDDDSKIKLMNFFRHTAYFIVAGIELKNQNFQMPCKNAPSPCKN</sequence>
<reference key="1">
    <citation type="journal article" date="2011" name="New Phytol.">
        <title>Regulation of nonsymbiotic and truncated hemoglobin genes of Lotus japonicus in plant organs and in response to nitric oxide and hormones.</title>
        <authorList>
            <person name="Bustos-Sanmamed P."/>
            <person name="Tovar-Mendez A."/>
            <person name="Crespi M."/>
            <person name="Sato S."/>
            <person name="Tabata S."/>
            <person name="Becana M."/>
        </authorList>
    </citation>
    <scope>TISSUE SPECIFICITY</scope>
    <scope>DEVELOPMENTAL STAGE</scope>
    <scope>INDUCTION BY ETHYLENE AND POLYAMINES</scope>
    <scope>REPRESSION BY GIBBERELLIC ACID; CYTOKININS AND COLD STRESS</scope>
    <source>
        <strain>cv. MG20</strain>
    </source>
</reference>
<evidence type="ECO:0000250" key="1">
    <source>
        <dbReference type="UniProtKB" id="I3SAV1"/>
    </source>
</evidence>
<evidence type="ECO:0000250" key="2">
    <source>
        <dbReference type="UniProtKB" id="Q67XG0"/>
    </source>
</evidence>
<evidence type="ECO:0000269" key="3">
    <source>
    </source>
</evidence>
<evidence type="ECO:0000303" key="4">
    <source>
    </source>
</evidence>
<evidence type="ECO:0000305" key="5"/>
<evidence type="ECO:0000305" key="6">
    <source>
    </source>
</evidence>
<proteinExistence type="evidence at transcript level"/>
<keyword id="KW-0349">Heme</keyword>
<keyword id="KW-0408">Iron</keyword>
<keyword id="KW-0479">Metal-binding</keyword>
<keyword id="KW-0536">Nodulation</keyword>
<keyword id="KW-0561">Oxygen transport</keyword>
<keyword id="KW-0813">Transport</keyword>
<comment type="function">
    <text evidence="1 2">Hemoglobin-like protein that exhibits an unusual concentration-independent binding of O(2) and CO (By similarity). Required for general plant development and during nodulation (By similarity). May promote shoot organogenesis from root explants (By similarity).</text>
</comment>
<comment type="subunit">
    <text evidence="2">Homodimer when ferric.</text>
</comment>
<comment type="tissue specificity">
    <text evidence="3">Mainly expressed in root nodules, but barely in leaves, roots, stems, flowers and fruits.</text>
</comment>
<comment type="developmental stage">
    <text evidence="3">In nodules, mainly localized in the cortex, and, to a lower extent, in the vascular bundles and infected tissues (PubMed:21073469). As nodule aged, restricted in the mid-cortex and inner cortex, vascular bundles, and periphery of infected zone (PubMed:21073469).</text>
</comment>
<comment type="induction">
    <text evidence="3">Induced by ethylene and polyamines (PA) but repressed by gibberellic acid (GA) in roots (PubMed:21073469). Repressed by cytokinins (CK, an equimolar mixture of kinetin and 6-benzyl-aminopurine) in nodules (PubMed:21073469). Down-regulated under cold stress in seedlings roots (PubMed:21073469).</text>
</comment>
<comment type="similarity">
    <text evidence="5">Belongs to the truncated hemoglobin family. Group II subfamily.</text>
</comment>
<dbReference type="SMR" id="P0DO64"/>
<dbReference type="OMA" id="LEGTNTH"/>
<dbReference type="GO" id="GO:0020037">
    <property type="term" value="F:heme binding"/>
    <property type="evidence" value="ECO:0007669"/>
    <property type="project" value="InterPro"/>
</dbReference>
<dbReference type="GO" id="GO:0046872">
    <property type="term" value="F:metal ion binding"/>
    <property type="evidence" value="ECO:0007669"/>
    <property type="project" value="UniProtKB-KW"/>
</dbReference>
<dbReference type="GO" id="GO:0019825">
    <property type="term" value="F:oxygen binding"/>
    <property type="evidence" value="ECO:0007669"/>
    <property type="project" value="InterPro"/>
</dbReference>
<dbReference type="GO" id="GO:0005344">
    <property type="term" value="F:oxygen carrier activity"/>
    <property type="evidence" value="ECO:0007669"/>
    <property type="project" value="UniProtKB-KW"/>
</dbReference>
<dbReference type="GO" id="GO:0009877">
    <property type="term" value="P:nodulation"/>
    <property type="evidence" value="ECO:0007669"/>
    <property type="project" value="UniProtKB-KW"/>
</dbReference>
<dbReference type="GO" id="GO:0009409">
    <property type="term" value="P:response to cold"/>
    <property type="evidence" value="ECO:0000270"/>
    <property type="project" value="UniProtKB"/>
</dbReference>
<dbReference type="GO" id="GO:0009735">
    <property type="term" value="P:response to cytokinin"/>
    <property type="evidence" value="ECO:0000270"/>
    <property type="project" value="UniProtKB"/>
</dbReference>
<dbReference type="CDD" id="cd19755">
    <property type="entry name" value="TrHb2_AtGlb3-like_O"/>
    <property type="match status" value="1"/>
</dbReference>
<dbReference type="Gene3D" id="1.10.490.10">
    <property type="entry name" value="Globins"/>
    <property type="match status" value="1"/>
</dbReference>
<dbReference type="InterPro" id="IPR044203">
    <property type="entry name" value="GlbO/GLB3-like"/>
</dbReference>
<dbReference type="InterPro" id="IPR009050">
    <property type="entry name" value="Globin-like_sf"/>
</dbReference>
<dbReference type="InterPro" id="IPR012292">
    <property type="entry name" value="Globin/Proto"/>
</dbReference>
<dbReference type="InterPro" id="IPR001486">
    <property type="entry name" value="Hemoglobin_trunc"/>
</dbReference>
<dbReference type="PANTHER" id="PTHR47366">
    <property type="entry name" value="TWO-ON-TWO HEMOGLOBIN-3"/>
    <property type="match status" value="1"/>
</dbReference>
<dbReference type="PANTHER" id="PTHR47366:SF1">
    <property type="entry name" value="TWO-ON-TWO HEMOGLOBIN-3"/>
    <property type="match status" value="1"/>
</dbReference>
<dbReference type="Pfam" id="PF01152">
    <property type="entry name" value="Bac_globin"/>
    <property type="match status" value="1"/>
</dbReference>
<dbReference type="SUPFAM" id="SSF46458">
    <property type="entry name" value="Globin-like"/>
    <property type="match status" value="1"/>
</dbReference>
<name>GLB31_LOTJA</name>
<organism>
    <name type="scientific">Lotus japonicus</name>
    <name type="common">Lotus corniculatus var. japonicus</name>
    <dbReference type="NCBI Taxonomy" id="34305"/>
    <lineage>
        <taxon>Eukaryota</taxon>
        <taxon>Viridiplantae</taxon>
        <taxon>Streptophyta</taxon>
        <taxon>Embryophyta</taxon>
        <taxon>Tracheophyta</taxon>
        <taxon>Spermatophyta</taxon>
        <taxon>Magnoliopsida</taxon>
        <taxon>eudicotyledons</taxon>
        <taxon>Gunneridae</taxon>
        <taxon>Pentapetalae</taxon>
        <taxon>rosids</taxon>
        <taxon>fabids</taxon>
        <taxon>Fabales</taxon>
        <taxon>Fabaceae</taxon>
        <taxon>Papilionoideae</taxon>
        <taxon>50 kb inversion clade</taxon>
        <taxon>NPAAA clade</taxon>
        <taxon>Hologalegina</taxon>
        <taxon>robinioid clade</taxon>
        <taxon>Loteae</taxon>
        <taxon>Lotus</taxon>
    </lineage>
</organism>
<accession>P0DO64</accession>
<gene>
    <name evidence="4" type="primary">GLB3-1</name>
    <name evidence="6" type="ordered locus">LotjaGi1g1v0398700</name>
    <name evidence="6" type="ordered locus">Lj1g3v2035270</name>
</gene>
<feature type="chain" id="PRO_0000460303" description="Group 2 truncated hemoglobin 3-1">
    <location>
        <begin position="1"/>
        <end position="168"/>
    </location>
</feature>
<feature type="binding site" description="proximal binding residue" evidence="2">
    <location>
        <position position="98"/>
    </location>
    <ligand>
        <name>heme b</name>
        <dbReference type="ChEBI" id="CHEBI:60344"/>
    </ligand>
    <ligandPart>
        <name>Fe</name>
        <dbReference type="ChEBI" id="CHEBI:18248"/>
    </ligandPart>
</feature>